<keyword id="KW-0284">Flavonoid biosynthesis</keyword>
<keyword id="KW-0413">Isomerase</keyword>
<gene>
    <name type="primary">CHI2</name>
    <name type="synonym">CHIB</name>
</gene>
<reference key="1">
    <citation type="journal article" date="1989" name="Plant Mol. Biol.">
        <title>Regulation of chalone flavanone isomerase (CHI) gene expression in Petunia hybrida: the use of alternative promoters in corolla anthers and pollen.</title>
        <authorList>
            <person name="van Tunen A.J."/>
            <person name="Hartman S.A."/>
            <person name="Mur L.A."/>
            <person name="Mol J.N.M."/>
        </authorList>
    </citation>
    <scope>NUCLEOTIDE SEQUENCE [GENOMIC DNA]</scope>
    <source>
        <strain>cv. Violet 30</strain>
        <tissue>Leaf</tissue>
    </source>
</reference>
<feature type="chain" id="PRO_0000166438" description="Chalcone--flavanone isomerase B">
    <location>
        <begin position="1"/>
        <end position="220"/>
    </location>
</feature>
<feature type="binding site" evidence="1">
    <location>
        <position position="50"/>
    </location>
    <ligand>
        <name>substrate</name>
    </ligand>
</feature>
<feature type="binding site" evidence="1">
    <location>
        <position position="115"/>
    </location>
    <ligand>
        <name>substrate</name>
    </ligand>
</feature>
<feature type="binding site" evidence="1">
    <location>
        <position position="192"/>
    </location>
    <ligand>
        <name>substrate</name>
    </ligand>
</feature>
<sequence length="220" mass="23944">MSPSVSVTKVQVENYVFPPTVKPPASTKTLFLGGAGHRGLDVEGKFVKFTVIGVYLEESAVQFLAPKWKGKSAEELIHSVDFFRDIVTGPFEKFTRVRFILPLTGKQFSEKVAENCVAHWKATGTYSDAGSRAIEKFLNVVKSETFLPGASILFTQSPLGSLTISFTKDDSISEAGNAVIENKQFSEAVLETIIGEHGVSPAAKCSIAARMSELFKNSLF</sequence>
<accession>P11651</accession>
<proteinExistence type="inferred from homology"/>
<organism>
    <name type="scientific">Petunia hybrida</name>
    <name type="common">Petunia</name>
    <dbReference type="NCBI Taxonomy" id="4102"/>
    <lineage>
        <taxon>Eukaryota</taxon>
        <taxon>Viridiplantae</taxon>
        <taxon>Streptophyta</taxon>
        <taxon>Embryophyta</taxon>
        <taxon>Tracheophyta</taxon>
        <taxon>Spermatophyta</taxon>
        <taxon>Magnoliopsida</taxon>
        <taxon>eudicotyledons</taxon>
        <taxon>Gunneridae</taxon>
        <taxon>Pentapetalae</taxon>
        <taxon>asterids</taxon>
        <taxon>lamiids</taxon>
        <taxon>Solanales</taxon>
        <taxon>Solanaceae</taxon>
        <taxon>Petunioideae</taxon>
        <taxon>Petunia</taxon>
    </lineage>
</organism>
<protein>
    <recommendedName>
        <fullName>Chalcone--flavanone isomerase B</fullName>
        <shortName>CHI-B</shortName>
        <shortName>Chalcone isomerase B</shortName>
        <ecNumber>5.5.1.6</ecNumber>
    </recommendedName>
</protein>
<dbReference type="EC" id="5.5.1.6"/>
<dbReference type="EMBL" id="X14590">
    <property type="protein sequence ID" value="CAA32730.1"/>
    <property type="molecule type" value="Genomic_DNA"/>
</dbReference>
<dbReference type="PIR" id="S04726">
    <property type="entry name" value="ISPJCB"/>
</dbReference>
<dbReference type="SMR" id="P11651"/>
<dbReference type="UniPathway" id="UPA00154"/>
<dbReference type="GO" id="GO:0045430">
    <property type="term" value="F:chalcone isomerase activity"/>
    <property type="evidence" value="ECO:0007669"/>
    <property type="project" value="UniProtKB-EC"/>
</dbReference>
<dbReference type="GO" id="GO:0009813">
    <property type="term" value="P:flavonoid biosynthetic process"/>
    <property type="evidence" value="ECO:0007669"/>
    <property type="project" value="UniProtKB-UniPathway"/>
</dbReference>
<dbReference type="Gene3D" id="1.10.890.20">
    <property type="match status" value="1"/>
</dbReference>
<dbReference type="Gene3D" id="3.50.70.10">
    <property type="match status" value="1"/>
</dbReference>
<dbReference type="InterPro" id="IPR044164">
    <property type="entry name" value="CFI"/>
</dbReference>
<dbReference type="InterPro" id="IPR016087">
    <property type="entry name" value="Chalcone_isomerase"/>
</dbReference>
<dbReference type="InterPro" id="IPR016088">
    <property type="entry name" value="Chalcone_isomerase_3-sand"/>
</dbReference>
<dbReference type="InterPro" id="IPR016089">
    <property type="entry name" value="Chalcone_isomerase_bundle_sf"/>
</dbReference>
<dbReference type="InterPro" id="IPR036298">
    <property type="entry name" value="Chalcone_isomerase_sf"/>
</dbReference>
<dbReference type="PANTHER" id="PTHR28039:SF8">
    <property type="entry name" value="CHALCONE--FLAVANONE ISOMERASE 1-RELATED"/>
    <property type="match status" value="1"/>
</dbReference>
<dbReference type="PANTHER" id="PTHR28039">
    <property type="entry name" value="CHALCONE--FLAVONONE ISOMERASE 1-RELATED"/>
    <property type="match status" value="1"/>
</dbReference>
<dbReference type="Pfam" id="PF02431">
    <property type="entry name" value="Chalcone"/>
    <property type="match status" value="1"/>
</dbReference>
<dbReference type="SUPFAM" id="SSF54626">
    <property type="entry name" value="Chalcone isomerase"/>
    <property type="match status" value="1"/>
</dbReference>
<comment type="function">
    <text evidence="1">Catalyzes the intramolecular cyclization of bicyclic chalcones into tricyclic (S)-flavanones. Responsible for the isomerization of 4,2',4',6'-tetrahydroxychalcone (also termed chalcone) into naringenin (By similarity).</text>
</comment>
<comment type="catalytic activity">
    <reaction>
        <text>a chalcone = a flavanone.</text>
        <dbReference type="EC" id="5.5.1.6"/>
    </reaction>
</comment>
<comment type="pathway">
    <text>Secondary metabolite biosynthesis; flavonoid biosynthesis.</text>
</comment>
<comment type="miscellaneous">
    <text>Part of the biosynthetic pathway for all classes of flavonoids, a large class of secondary plant metabolites, many of which are brightly colored.</text>
</comment>
<comment type="similarity">
    <text evidence="2">Belongs to the chalcone isomerase family.</text>
</comment>
<name>CFI2_PETHY</name>
<evidence type="ECO:0000250" key="1"/>
<evidence type="ECO:0000305" key="2"/>